<reference evidence="4" key="1">
    <citation type="journal article" date="2003" name="Genome Res.">
        <title>An evolutionary analysis of orphan genes in Drosophila.</title>
        <authorList>
            <person name="Domazet-Loso T."/>
            <person name="Tautz D."/>
        </authorList>
    </citation>
    <scope>NUCLEOTIDE SEQUENCE [MRNA]</scope>
</reference>
<reference key="2">
    <citation type="journal article" date="2007" name="Nature">
        <title>Evolution of genes and genomes on the Drosophila phylogeny.</title>
        <authorList>
            <consortium name="Drosophila 12 genomes consortium"/>
        </authorList>
    </citation>
    <scope>NUCLEOTIDE SEQUENCE [LARGE SCALE GENOMIC DNA]</scope>
    <source>
        <strain>Tai18E2 / Tucson 14021-0261.01</strain>
    </source>
</reference>
<gene>
    <name type="primary">RpS14a</name>
    <name type="ORF">GE15748</name>
</gene>
<keyword id="KW-0687">Ribonucleoprotein</keyword>
<keyword id="KW-0689">Ribosomal protein</keyword>
<protein>
    <recommendedName>
        <fullName evidence="3">Small ribosomal subunit protein uS11</fullName>
    </recommendedName>
    <alternativeName>
        <fullName>40S ribosomal protein S14a</fullName>
    </alternativeName>
</protein>
<name>RS14A_DROYA</name>
<feature type="chain" id="PRO_0000372800" description="Small ribosomal subunit protein uS11">
    <location>
        <begin position="1"/>
        <end position="151"/>
    </location>
</feature>
<feature type="region of interest" description="Disordered" evidence="2">
    <location>
        <begin position="131"/>
        <end position="151"/>
    </location>
</feature>
<feature type="compositionally biased region" description="Basic residues" evidence="2">
    <location>
        <begin position="142"/>
        <end position="151"/>
    </location>
</feature>
<comment type="similarity">
    <text evidence="1">Belongs to the universal ribosomal protein uS11 family.</text>
</comment>
<evidence type="ECO:0000255" key="1"/>
<evidence type="ECO:0000256" key="2">
    <source>
        <dbReference type="SAM" id="MobiDB-lite"/>
    </source>
</evidence>
<evidence type="ECO:0000305" key="3"/>
<evidence type="ECO:0000312" key="4">
    <source>
        <dbReference type="EMBL" id="AAR09807.1"/>
    </source>
</evidence>
<proteinExistence type="evidence at transcript level"/>
<accession>Q6XI08</accession>
<organism>
    <name type="scientific">Drosophila yakuba</name>
    <name type="common">Fruit fly</name>
    <dbReference type="NCBI Taxonomy" id="7245"/>
    <lineage>
        <taxon>Eukaryota</taxon>
        <taxon>Metazoa</taxon>
        <taxon>Ecdysozoa</taxon>
        <taxon>Arthropoda</taxon>
        <taxon>Hexapoda</taxon>
        <taxon>Insecta</taxon>
        <taxon>Pterygota</taxon>
        <taxon>Neoptera</taxon>
        <taxon>Endopterygota</taxon>
        <taxon>Diptera</taxon>
        <taxon>Brachycera</taxon>
        <taxon>Muscomorpha</taxon>
        <taxon>Ephydroidea</taxon>
        <taxon>Drosophilidae</taxon>
        <taxon>Drosophila</taxon>
        <taxon>Sophophora</taxon>
    </lineage>
</organism>
<dbReference type="EMBL" id="AY231784">
    <property type="protein sequence ID" value="AAR09807.1"/>
    <property type="molecule type" value="mRNA"/>
</dbReference>
<dbReference type="EMBL" id="AY232024">
    <property type="protein sequence ID" value="AAR10047.1"/>
    <property type="molecule type" value="mRNA"/>
</dbReference>
<dbReference type="EMBL" id="CM000162">
    <property type="protein sequence ID" value="EDX02321.1"/>
    <property type="molecule type" value="Genomic_DNA"/>
</dbReference>
<dbReference type="SMR" id="Q6XI08"/>
<dbReference type="IntAct" id="Q6XI08">
    <property type="interactions" value="1"/>
</dbReference>
<dbReference type="EnsemblMetazoa" id="FBtr0262266">
    <property type="protein sequence ID" value="FBpp0260758"/>
    <property type="gene ID" value="FBgn0068058"/>
</dbReference>
<dbReference type="EnsemblMetazoa" id="XM_002101177.3">
    <property type="protein sequence ID" value="XP_002101213.1"/>
    <property type="gene ID" value="LOC6525377"/>
</dbReference>
<dbReference type="GeneID" id="6525377"/>
<dbReference type="KEGG" id="dya:Dyak_GE15748"/>
<dbReference type="eggNOG" id="KOG0407">
    <property type="taxonomic scope" value="Eukaryota"/>
</dbReference>
<dbReference type="HOGENOM" id="CLU_072439_6_0_1"/>
<dbReference type="OMA" id="KWGVAHI"/>
<dbReference type="OrthoDB" id="1677536at2759"/>
<dbReference type="PhylomeDB" id="Q6XI08"/>
<dbReference type="ChiTaRS" id="RpS14a">
    <property type="organism name" value="fly"/>
</dbReference>
<dbReference type="Proteomes" id="UP000002282">
    <property type="component" value="Chromosome X"/>
</dbReference>
<dbReference type="GO" id="GO:1990904">
    <property type="term" value="C:ribonucleoprotein complex"/>
    <property type="evidence" value="ECO:0007669"/>
    <property type="project" value="UniProtKB-KW"/>
</dbReference>
<dbReference type="GO" id="GO:0005840">
    <property type="term" value="C:ribosome"/>
    <property type="evidence" value="ECO:0007669"/>
    <property type="project" value="UniProtKB-KW"/>
</dbReference>
<dbReference type="GO" id="GO:0003735">
    <property type="term" value="F:structural constituent of ribosome"/>
    <property type="evidence" value="ECO:0007669"/>
    <property type="project" value="InterPro"/>
</dbReference>
<dbReference type="GO" id="GO:0006412">
    <property type="term" value="P:translation"/>
    <property type="evidence" value="ECO:0007669"/>
    <property type="project" value="InterPro"/>
</dbReference>
<dbReference type="FunFam" id="3.30.420.80:FF:000002">
    <property type="entry name" value="40S ribosomal protein S14"/>
    <property type="match status" value="1"/>
</dbReference>
<dbReference type="Gene3D" id="3.30.420.80">
    <property type="entry name" value="Ribosomal protein S11"/>
    <property type="match status" value="1"/>
</dbReference>
<dbReference type="HAMAP" id="MF_01310">
    <property type="entry name" value="Ribosomal_uS11"/>
    <property type="match status" value="1"/>
</dbReference>
<dbReference type="InterPro" id="IPR001971">
    <property type="entry name" value="Ribosomal_uS11"/>
</dbReference>
<dbReference type="InterPro" id="IPR018102">
    <property type="entry name" value="Ribosomal_uS11_CS"/>
</dbReference>
<dbReference type="InterPro" id="IPR036967">
    <property type="entry name" value="Ribosomal_uS11_sf"/>
</dbReference>
<dbReference type="NCBIfam" id="NF007176">
    <property type="entry name" value="PRK09607.1"/>
    <property type="match status" value="1"/>
</dbReference>
<dbReference type="PANTHER" id="PTHR11759">
    <property type="entry name" value="40S RIBOSOMAL PROTEIN S14/30S RIBOSOMAL PROTEIN S11"/>
    <property type="match status" value="1"/>
</dbReference>
<dbReference type="Pfam" id="PF00411">
    <property type="entry name" value="Ribosomal_S11"/>
    <property type="match status" value="1"/>
</dbReference>
<dbReference type="PIRSF" id="PIRSF002131">
    <property type="entry name" value="Ribosomal_S11"/>
    <property type="match status" value="1"/>
</dbReference>
<dbReference type="SUPFAM" id="SSF53137">
    <property type="entry name" value="Translational machinery components"/>
    <property type="match status" value="1"/>
</dbReference>
<dbReference type="PROSITE" id="PS00054">
    <property type="entry name" value="RIBOSOMAL_S11"/>
    <property type="match status" value="1"/>
</dbReference>
<sequence>MAPRKAKVQKEEVQVQLGPQVRDGEIVFGVAHIYASFNDTFVHVTDLSGRETIARVTGGMKVKADRDEASPYAAMLAAQDVAEKCKTLGITALHIKLRATGGNKTKTPGPGAQSALRALARSSMKIGRIEDVTPIPSDSTRRKGGRRGRRL</sequence>